<evidence type="ECO:0000305" key="1"/>
<name>BEL2_SFV1</name>
<feature type="chain" id="PRO_0000125513" description="Protein Bel-2">
    <location>
        <begin position="1"/>
        <end position="403"/>
    </location>
</feature>
<feature type="sequence conflict" description="In Ref. 2; AAA47803." evidence="1" ref="2">
    <original>L</original>
    <variation>P</variation>
    <location>
        <position position="171"/>
    </location>
</feature>
<feature type="sequence conflict" description="In Ref. 2; AAA47803." evidence="1" ref="2">
    <original>E</original>
    <variation>K</variation>
    <location>
        <position position="216"/>
    </location>
</feature>
<feature type="sequence conflict" description="In Ref. 2; AAA47803." evidence="1" ref="2">
    <original>R</original>
    <variation>G</variation>
    <location>
        <position position="268"/>
    </location>
</feature>
<feature type="sequence conflict" description="In Ref. 2; AAA47803." evidence="1" ref="2">
    <original>N</original>
    <variation>D</variation>
    <location>
        <position position="403"/>
    </location>
</feature>
<comment type="miscellaneous">
    <text>Bel-2 expression is low.</text>
</comment>
<comment type="similarity">
    <text evidence="1">Belongs to the spumavirus protein Bel-2 family.</text>
</comment>
<organismHost>
    <name type="scientific">Homo sapiens</name>
    <name type="common">Human</name>
    <dbReference type="NCBI Taxonomy" id="9606"/>
</organismHost>
<organismHost>
    <name type="scientific">Macaca</name>
    <name type="common">macaques</name>
    <dbReference type="NCBI Taxonomy" id="9539"/>
</organismHost>
<proteinExistence type="inferred from homology"/>
<dbReference type="EMBL" id="X54482">
    <property type="status" value="NOT_ANNOTATED_CDS"/>
    <property type="molecule type" value="Genomic_DNA"/>
</dbReference>
<dbReference type="EMBL" id="M74039">
    <property type="protein sequence ID" value="AAA47803.1"/>
    <property type="molecule type" value="Genomic_DNA"/>
</dbReference>
<dbReference type="PIR" id="C39924">
    <property type="entry name" value="WMLJS2"/>
</dbReference>
<dbReference type="PIR" id="S18741">
    <property type="entry name" value="S18741"/>
</dbReference>
<dbReference type="Proteomes" id="UP000007216">
    <property type="component" value="Segment"/>
</dbReference>
<dbReference type="GO" id="GO:0045893">
    <property type="term" value="P:positive regulation of DNA-templated transcription"/>
    <property type="evidence" value="ECO:0007669"/>
    <property type="project" value="InterPro"/>
</dbReference>
<dbReference type="GO" id="GO:0016032">
    <property type="term" value="P:viral process"/>
    <property type="evidence" value="ECO:0007669"/>
    <property type="project" value="InterPro"/>
</dbReference>
<dbReference type="InterPro" id="IPR004956">
    <property type="entry name" value="Foamy_BEL"/>
</dbReference>
<dbReference type="Pfam" id="PF03274">
    <property type="entry name" value="Foamy_BEL"/>
    <property type="match status" value="1"/>
</dbReference>
<protein>
    <recommendedName>
        <fullName>Protein Bel-2</fullName>
    </recommendedName>
</protein>
<accession>P29170</accession>
<reference key="1">
    <citation type="journal article" date="1991" name="Gene">
        <title>Sequence analysis of the simian foamy virus type 1 genome.</title>
        <authorList>
            <person name="Kupiec J.-J."/>
            <person name="Kay A."/>
            <person name="Hayat M."/>
            <person name="Ravier R."/>
            <person name="Peries J."/>
            <person name="Galibert F."/>
        </authorList>
    </citation>
    <scope>NUCLEOTIDE SEQUENCE [GENOMIC DNA]</scope>
</reference>
<reference key="2">
    <citation type="journal article" date="1991" name="J. Virol.">
        <title>Identification of the simian foamy virus transcriptional transactivator gene (taf).</title>
        <authorList>
            <person name="Mergia A."/>
            <person name="Shaw K.E.S."/>
            <person name="Pratt-Lowe E."/>
            <person name="Barry P.A."/>
            <person name="Luciw P.A."/>
        </authorList>
    </citation>
    <scope>NUCLEOTIDE SEQUENCE [GENOMIC DNA]</scope>
</reference>
<gene>
    <name type="primary">bel2</name>
</gene>
<sequence length="403" mass="45816">MNDACLLFPASKELDSQNVAVILADDMKHSESILQLGSGAPRKGFPLTSSPLLPMVTPWPFSQDHAAPTLYSLLVAYYKSFQSQKLDPPKWLWQCLGDPSGRKCMVTQFLLPPLGQVRISCYRNLTSIVICQAVDPWENNNEADWRKNPMARPRIKCDHALCFKVVYEGTLWRPHDQKCWLIRLTEGHKYGMEELSPGDWKILQESRPYPYGPIGEDPNLQYAVGVKMKVIGGPLTSTVLALKALSFHRVNICNMDNPSLGEGHAPLRYSHALKAYGPQYGSCEERVWQTATKCIGPEEENYWCEYDHRGFFPMVPNKLSPTWVRHAAPYCIQRFATPYDLQYFANELLPPGFSITTPKGVSYTSDRRLHYGNEGTLQEYNENCDKVKRGYDEISSSDYSDEN</sequence>
<organism>
    <name type="scientific">Simian foamy virus type 1</name>
    <name type="common">SFVmac</name>
    <name type="synonym">SFV-1</name>
    <dbReference type="NCBI Taxonomy" id="338478"/>
    <lineage>
        <taxon>Viruses</taxon>
        <taxon>Riboviria</taxon>
        <taxon>Pararnavirae</taxon>
        <taxon>Artverviricota</taxon>
        <taxon>Revtraviricetes</taxon>
        <taxon>Ortervirales</taxon>
        <taxon>Retroviridae</taxon>
        <taxon>Spumaretrovirinae</taxon>
        <taxon>Spumavirus</taxon>
    </lineage>
</organism>